<feature type="chain" id="PRO_0000318506" description="Deoxynucleotidyltransferase terminal-interacting protein 2">
    <location>
        <begin position="1"/>
        <end position="758"/>
    </location>
</feature>
<feature type="region of interest" description="Disordered" evidence="4">
    <location>
        <begin position="1"/>
        <end position="176"/>
    </location>
</feature>
<feature type="region of interest" description="Disordered" evidence="4">
    <location>
        <begin position="231"/>
        <end position="277"/>
    </location>
</feature>
<feature type="region of interest" description="Disordered" evidence="4">
    <location>
        <begin position="312"/>
        <end position="353"/>
    </location>
</feature>
<feature type="region of interest" description="Disordered" evidence="4">
    <location>
        <begin position="377"/>
        <end position="480"/>
    </location>
</feature>
<feature type="region of interest" description="Disordered" evidence="4">
    <location>
        <begin position="501"/>
        <end position="552"/>
    </location>
</feature>
<feature type="region of interest" description="TdBR region; mediates interaction with DNTT" evidence="1">
    <location>
        <begin position="550"/>
        <end position="607"/>
    </location>
</feature>
<feature type="region of interest" description="Disordered" evidence="4">
    <location>
        <begin position="621"/>
        <end position="647"/>
    </location>
</feature>
<feature type="coiled-coil region" evidence="3">
    <location>
        <begin position="512"/>
        <end position="541"/>
    </location>
</feature>
<feature type="compositionally biased region" description="Polar residues" evidence="4">
    <location>
        <begin position="1"/>
        <end position="21"/>
    </location>
</feature>
<feature type="compositionally biased region" description="Low complexity" evidence="4">
    <location>
        <begin position="128"/>
        <end position="143"/>
    </location>
</feature>
<feature type="compositionally biased region" description="Polar residues" evidence="4">
    <location>
        <begin position="155"/>
        <end position="172"/>
    </location>
</feature>
<feature type="compositionally biased region" description="Polar residues" evidence="4">
    <location>
        <begin position="231"/>
        <end position="255"/>
    </location>
</feature>
<feature type="compositionally biased region" description="Polar residues" evidence="4">
    <location>
        <begin position="321"/>
        <end position="353"/>
    </location>
</feature>
<feature type="compositionally biased region" description="Basic and acidic residues" evidence="4">
    <location>
        <begin position="377"/>
        <end position="387"/>
    </location>
</feature>
<feature type="compositionally biased region" description="Polar residues" evidence="4">
    <location>
        <begin position="431"/>
        <end position="440"/>
    </location>
</feature>
<feature type="compositionally biased region" description="Low complexity" evidence="4">
    <location>
        <begin position="447"/>
        <end position="456"/>
    </location>
</feature>
<feature type="compositionally biased region" description="Acidic residues" evidence="4">
    <location>
        <begin position="515"/>
        <end position="550"/>
    </location>
</feature>
<feature type="compositionally biased region" description="Basic residues" evidence="4">
    <location>
        <begin position="630"/>
        <end position="639"/>
    </location>
</feature>
<feature type="modified residue" description="Phosphoserine" evidence="2">
    <location>
        <position position="17"/>
    </location>
</feature>
<feature type="modified residue" description="Phosphoserine" evidence="2">
    <location>
        <position position="133"/>
    </location>
</feature>
<feature type="modified residue" description="Phosphoserine" evidence="2">
    <location>
        <position position="137"/>
    </location>
</feature>
<feature type="modified residue" description="Phosphoserine" evidence="2">
    <location>
        <position position="140"/>
    </location>
</feature>
<feature type="modified residue" description="Phosphoserine" evidence="6">
    <location>
        <position position="173"/>
    </location>
</feature>
<feature type="modified residue" description="Phosphoserine" evidence="2">
    <location>
        <position position="183"/>
    </location>
</feature>
<feature type="modified residue" description="Phosphoserine" evidence="2">
    <location>
        <position position="229"/>
    </location>
</feature>
<feature type="modified residue" description="Phosphoserine" evidence="2">
    <location>
        <position position="240"/>
    </location>
</feature>
<feature type="modified residue" description="Phosphoserine" evidence="6">
    <location>
        <position position="248"/>
    </location>
</feature>
<feature type="modified residue" description="Phosphoserine" evidence="6">
    <location>
        <position position="255"/>
    </location>
</feature>
<feature type="modified residue" description="Phosphoserine" evidence="2">
    <location>
        <position position="324"/>
    </location>
</feature>
<feature type="modified residue" description="Phosphoserine" evidence="2">
    <location>
        <position position="330"/>
    </location>
</feature>
<feature type="modified residue" description="Phosphoserine" evidence="6">
    <location>
        <position position="476"/>
    </location>
</feature>
<feature type="modified residue" description="Phosphoserine" evidence="2">
    <location>
        <position position="512"/>
    </location>
</feature>
<feature type="modified residue" description="Phosphothreonine" evidence="2">
    <location>
        <position position="612"/>
    </location>
</feature>
<feature type="cross-link" description="Glycyl lysine isopeptide (Lys-Gly) (interchain with G-Cter in SUMO2)" evidence="2">
    <location>
        <position position="210"/>
    </location>
</feature>
<feature type="cross-link" description="Glycyl lysine isopeptide (Lys-Gly) (interchain with G-Cter in SUMO2)" evidence="2">
    <location>
        <position position="317"/>
    </location>
</feature>
<feature type="cross-link" description="Glycyl lysine isopeptide (Lys-Gly) (interchain with G-Cter in SUMO2)" evidence="2">
    <location>
        <position position="345"/>
    </location>
</feature>
<feature type="cross-link" description="Glycyl lysine isopeptide (Lys-Gly) (interchain with G-Cter in SUMO2)" evidence="2">
    <location>
        <position position="384"/>
    </location>
</feature>
<feature type="cross-link" description="Glycyl lysine isopeptide (Lys-Gly) (interchain with G-Cter in SUMO2)" evidence="2">
    <location>
        <position position="560"/>
    </location>
</feature>
<feature type="cross-link" description="Glycyl lysine isopeptide (Lys-Gly) (interchain with G-Cter in SUMO2)" evidence="2">
    <location>
        <position position="586"/>
    </location>
</feature>
<feature type="cross-link" description="Glycyl lysine isopeptide (Lys-Gly) (interchain with G-Cter in SUMO2)" evidence="2">
    <location>
        <position position="608"/>
    </location>
</feature>
<feature type="cross-link" description="Glycyl lysine isopeptide (Lys-Gly) (interchain with G-Cter in SUMO2)" evidence="2">
    <location>
        <position position="628"/>
    </location>
</feature>
<feature type="cross-link" description="Glycyl lysine isopeptide (Lys-Gly) (interchain with G-Cter in SUMO2)" evidence="2">
    <location>
        <position position="651"/>
    </location>
</feature>
<feature type="cross-link" description="Glycyl lysine isopeptide (Lys-Gly) (interchain with G-Cter in SUMO2)" evidence="2">
    <location>
        <position position="660"/>
    </location>
</feature>
<feature type="cross-link" description="Glycyl lysine isopeptide (Lys-Gly) (interchain with G-Cter in SUMO2)" evidence="2">
    <location>
        <position position="688"/>
    </location>
</feature>
<feature type="cross-link" description="Glycyl lysine isopeptide (Lys-Gly) (interchain with G-Cter in SUMO2)" evidence="2">
    <location>
        <position position="733"/>
    </location>
</feature>
<feature type="sequence conflict" description="In Ref. 1; BAE37264." evidence="5" ref="1">
    <original>E</original>
    <variation>D</variation>
    <location>
        <position position="517"/>
    </location>
</feature>
<dbReference type="EMBL" id="AK135957">
    <property type="protein sequence ID" value="BAE22744.1"/>
    <property type="molecule type" value="mRNA"/>
</dbReference>
<dbReference type="EMBL" id="AK163260">
    <property type="protein sequence ID" value="BAE37264.1"/>
    <property type="molecule type" value="mRNA"/>
</dbReference>
<dbReference type="EMBL" id="AK168536">
    <property type="protein sequence ID" value="BAE40414.1"/>
    <property type="molecule type" value="mRNA"/>
</dbReference>
<dbReference type="EMBL" id="BC028305">
    <property type="protein sequence ID" value="AAH28305.1"/>
    <property type="molecule type" value="mRNA"/>
</dbReference>
<dbReference type="CCDS" id="CCDS17809.1"/>
<dbReference type="RefSeq" id="NP_722501.1">
    <property type="nucleotide sequence ID" value="NM_153806.2"/>
</dbReference>
<dbReference type="SMR" id="Q8R2M2"/>
<dbReference type="BioGRID" id="221260">
    <property type="interactions" value="4"/>
</dbReference>
<dbReference type="FunCoup" id="Q8R2M2">
    <property type="interactions" value="2421"/>
</dbReference>
<dbReference type="STRING" id="10090.ENSMUSP00000045043"/>
<dbReference type="GlyGen" id="Q8R2M2">
    <property type="glycosylation" value="3 sites, 1 O-linked glycan (3 sites)"/>
</dbReference>
<dbReference type="iPTMnet" id="Q8R2M2"/>
<dbReference type="PhosphoSitePlus" id="Q8R2M2"/>
<dbReference type="SwissPalm" id="Q8R2M2"/>
<dbReference type="jPOST" id="Q8R2M2"/>
<dbReference type="PaxDb" id="10090-ENSMUSP00000045043"/>
<dbReference type="PeptideAtlas" id="Q8R2M2"/>
<dbReference type="ProteomicsDB" id="263028"/>
<dbReference type="Pumba" id="Q8R2M2"/>
<dbReference type="Antibodypedia" id="48013">
    <property type="antibodies" value="22 antibodies from 9 providers"/>
</dbReference>
<dbReference type="Ensembl" id="ENSMUST00000035776.10">
    <property type="protein sequence ID" value="ENSMUSP00000045043.9"/>
    <property type="gene ID" value="ENSMUSG00000039756.13"/>
</dbReference>
<dbReference type="GeneID" id="99480"/>
<dbReference type="KEGG" id="mmu:99480"/>
<dbReference type="UCSC" id="uc008rep.1">
    <property type="organism name" value="mouse"/>
</dbReference>
<dbReference type="AGR" id="MGI:1923173"/>
<dbReference type="CTD" id="30836"/>
<dbReference type="MGI" id="MGI:1923173">
    <property type="gene designation" value="Dnttip2"/>
</dbReference>
<dbReference type="VEuPathDB" id="HostDB:ENSMUSG00000039756"/>
<dbReference type="eggNOG" id="KOG3100">
    <property type="taxonomic scope" value="Eukaryota"/>
</dbReference>
<dbReference type="GeneTree" id="ENSGT00510000048142"/>
<dbReference type="HOGENOM" id="CLU_018725_0_0_1"/>
<dbReference type="InParanoid" id="Q8R2M2"/>
<dbReference type="OMA" id="SENMSCD"/>
<dbReference type="OrthoDB" id="427886at2759"/>
<dbReference type="PhylomeDB" id="Q8R2M2"/>
<dbReference type="TreeFam" id="TF105964"/>
<dbReference type="BioGRID-ORCS" id="99480">
    <property type="hits" value="20 hits in 81 CRISPR screens"/>
</dbReference>
<dbReference type="ChiTaRS" id="Dnttip2">
    <property type="organism name" value="mouse"/>
</dbReference>
<dbReference type="PRO" id="PR:Q8R2M2"/>
<dbReference type="Proteomes" id="UP000000589">
    <property type="component" value="Chromosome 3"/>
</dbReference>
<dbReference type="RNAct" id="Q8R2M2">
    <property type="molecule type" value="protein"/>
</dbReference>
<dbReference type="Bgee" id="ENSMUSG00000039756">
    <property type="expression patterns" value="Expressed in otic placode and 271 other cell types or tissues"/>
</dbReference>
<dbReference type="GO" id="GO:0005694">
    <property type="term" value="C:chromosome"/>
    <property type="evidence" value="ECO:0007669"/>
    <property type="project" value="Ensembl"/>
</dbReference>
<dbReference type="GO" id="GO:0005730">
    <property type="term" value="C:nucleolus"/>
    <property type="evidence" value="ECO:0007669"/>
    <property type="project" value="UniProtKB-SubCell"/>
</dbReference>
<dbReference type="GO" id="GO:0005654">
    <property type="term" value="C:nucleoplasm"/>
    <property type="evidence" value="ECO:0007669"/>
    <property type="project" value="Ensembl"/>
</dbReference>
<dbReference type="GO" id="GO:0032040">
    <property type="term" value="C:small-subunit processome"/>
    <property type="evidence" value="ECO:0000250"/>
    <property type="project" value="UniProtKB"/>
</dbReference>
<dbReference type="GO" id="GO:0042274">
    <property type="term" value="P:ribosomal small subunit biogenesis"/>
    <property type="evidence" value="ECO:0000250"/>
    <property type="project" value="UniProtKB"/>
</dbReference>
<dbReference type="InterPro" id="IPR039883">
    <property type="entry name" value="Fcf2/DNTTIP2"/>
</dbReference>
<dbReference type="InterPro" id="IPR014810">
    <property type="entry name" value="Fcf2_C"/>
</dbReference>
<dbReference type="PANTHER" id="PTHR21686">
    <property type="entry name" value="DEOXYNUCLEOTIDYLTRANSFERASE TERMINAL-INTERACTING PROTEIN 2"/>
    <property type="match status" value="1"/>
</dbReference>
<dbReference type="PANTHER" id="PTHR21686:SF12">
    <property type="entry name" value="DEOXYNUCLEOTIDYLTRANSFERASE TERMINAL-INTERACTING PROTEIN 2"/>
    <property type="match status" value="1"/>
</dbReference>
<dbReference type="Pfam" id="PF08698">
    <property type="entry name" value="Fcf2"/>
    <property type="match status" value="1"/>
</dbReference>
<evidence type="ECO:0000250" key="1"/>
<evidence type="ECO:0000250" key="2">
    <source>
        <dbReference type="UniProtKB" id="Q5QJE6"/>
    </source>
</evidence>
<evidence type="ECO:0000255" key="3"/>
<evidence type="ECO:0000256" key="4">
    <source>
        <dbReference type="SAM" id="MobiDB-lite"/>
    </source>
</evidence>
<evidence type="ECO:0000305" key="5"/>
<evidence type="ECO:0007744" key="6">
    <source>
    </source>
</evidence>
<keyword id="KW-0175">Coiled coil</keyword>
<keyword id="KW-1017">Isopeptide bond</keyword>
<keyword id="KW-0539">Nucleus</keyword>
<keyword id="KW-0597">Phosphoprotein</keyword>
<keyword id="KW-1185">Reference proteome</keyword>
<keyword id="KW-0804">Transcription</keyword>
<keyword id="KW-0805">Transcription regulation</keyword>
<keyword id="KW-0832">Ubl conjugation</keyword>
<name>TDIF2_MOUSE</name>
<accession>Q8R2M2</accession>
<accession>Q3TQW8</accession>
<accession>Q3UX19</accession>
<reference key="1">
    <citation type="journal article" date="2005" name="Science">
        <title>The transcriptional landscape of the mammalian genome.</title>
        <authorList>
            <person name="Carninci P."/>
            <person name="Kasukawa T."/>
            <person name="Katayama S."/>
            <person name="Gough J."/>
            <person name="Frith M.C."/>
            <person name="Maeda N."/>
            <person name="Oyama R."/>
            <person name="Ravasi T."/>
            <person name="Lenhard B."/>
            <person name="Wells C."/>
            <person name="Kodzius R."/>
            <person name="Shimokawa K."/>
            <person name="Bajic V.B."/>
            <person name="Brenner S.E."/>
            <person name="Batalov S."/>
            <person name="Forrest A.R."/>
            <person name="Zavolan M."/>
            <person name="Davis M.J."/>
            <person name="Wilming L.G."/>
            <person name="Aidinis V."/>
            <person name="Allen J.E."/>
            <person name="Ambesi-Impiombato A."/>
            <person name="Apweiler R."/>
            <person name="Aturaliya R.N."/>
            <person name="Bailey T.L."/>
            <person name="Bansal M."/>
            <person name="Baxter L."/>
            <person name="Beisel K.W."/>
            <person name="Bersano T."/>
            <person name="Bono H."/>
            <person name="Chalk A.M."/>
            <person name="Chiu K.P."/>
            <person name="Choudhary V."/>
            <person name="Christoffels A."/>
            <person name="Clutterbuck D.R."/>
            <person name="Crowe M.L."/>
            <person name="Dalla E."/>
            <person name="Dalrymple B.P."/>
            <person name="de Bono B."/>
            <person name="Della Gatta G."/>
            <person name="di Bernardo D."/>
            <person name="Down T."/>
            <person name="Engstrom P."/>
            <person name="Fagiolini M."/>
            <person name="Faulkner G."/>
            <person name="Fletcher C.F."/>
            <person name="Fukushima T."/>
            <person name="Furuno M."/>
            <person name="Futaki S."/>
            <person name="Gariboldi M."/>
            <person name="Georgii-Hemming P."/>
            <person name="Gingeras T.R."/>
            <person name="Gojobori T."/>
            <person name="Green R.E."/>
            <person name="Gustincich S."/>
            <person name="Harbers M."/>
            <person name="Hayashi Y."/>
            <person name="Hensch T.K."/>
            <person name="Hirokawa N."/>
            <person name="Hill D."/>
            <person name="Huminiecki L."/>
            <person name="Iacono M."/>
            <person name="Ikeo K."/>
            <person name="Iwama A."/>
            <person name="Ishikawa T."/>
            <person name="Jakt M."/>
            <person name="Kanapin A."/>
            <person name="Katoh M."/>
            <person name="Kawasawa Y."/>
            <person name="Kelso J."/>
            <person name="Kitamura H."/>
            <person name="Kitano H."/>
            <person name="Kollias G."/>
            <person name="Krishnan S.P."/>
            <person name="Kruger A."/>
            <person name="Kummerfeld S.K."/>
            <person name="Kurochkin I.V."/>
            <person name="Lareau L.F."/>
            <person name="Lazarevic D."/>
            <person name="Lipovich L."/>
            <person name="Liu J."/>
            <person name="Liuni S."/>
            <person name="McWilliam S."/>
            <person name="Madan Babu M."/>
            <person name="Madera M."/>
            <person name="Marchionni L."/>
            <person name="Matsuda H."/>
            <person name="Matsuzawa S."/>
            <person name="Miki H."/>
            <person name="Mignone F."/>
            <person name="Miyake S."/>
            <person name="Morris K."/>
            <person name="Mottagui-Tabar S."/>
            <person name="Mulder N."/>
            <person name="Nakano N."/>
            <person name="Nakauchi H."/>
            <person name="Ng P."/>
            <person name="Nilsson R."/>
            <person name="Nishiguchi S."/>
            <person name="Nishikawa S."/>
            <person name="Nori F."/>
            <person name="Ohara O."/>
            <person name="Okazaki Y."/>
            <person name="Orlando V."/>
            <person name="Pang K.C."/>
            <person name="Pavan W.J."/>
            <person name="Pavesi G."/>
            <person name="Pesole G."/>
            <person name="Petrovsky N."/>
            <person name="Piazza S."/>
            <person name="Reed J."/>
            <person name="Reid J.F."/>
            <person name="Ring B.Z."/>
            <person name="Ringwald M."/>
            <person name="Rost B."/>
            <person name="Ruan Y."/>
            <person name="Salzberg S.L."/>
            <person name="Sandelin A."/>
            <person name="Schneider C."/>
            <person name="Schoenbach C."/>
            <person name="Sekiguchi K."/>
            <person name="Semple C.A."/>
            <person name="Seno S."/>
            <person name="Sessa L."/>
            <person name="Sheng Y."/>
            <person name="Shibata Y."/>
            <person name="Shimada H."/>
            <person name="Shimada K."/>
            <person name="Silva D."/>
            <person name="Sinclair B."/>
            <person name="Sperling S."/>
            <person name="Stupka E."/>
            <person name="Sugiura K."/>
            <person name="Sultana R."/>
            <person name="Takenaka Y."/>
            <person name="Taki K."/>
            <person name="Tammoja K."/>
            <person name="Tan S.L."/>
            <person name="Tang S."/>
            <person name="Taylor M.S."/>
            <person name="Tegner J."/>
            <person name="Teichmann S.A."/>
            <person name="Ueda H.R."/>
            <person name="van Nimwegen E."/>
            <person name="Verardo R."/>
            <person name="Wei C.L."/>
            <person name="Yagi K."/>
            <person name="Yamanishi H."/>
            <person name="Zabarovsky E."/>
            <person name="Zhu S."/>
            <person name="Zimmer A."/>
            <person name="Hide W."/>
            <person name="Bult C."/>
            <person name="Grimmond S.M."/>
            <person name="Teasdale R.D."/>
            <person name="Liu E.T."/>
            <person name="Brusic V."/>
            <person name="Quackenbush J."/>
            <person name="Wahlestedt C."/>
            <person name="Mattick J.S."/>
            <person name="Hume D.A."/>
            <person name="Kai C."/>
            <person name="Sasaki D."/>
            <person name="Tomaru Y."/>
            <person name="Fukuda S."/>
            <person name="Kanamori-Katayama M."/>
            <person name="Suzuki M."/>
            <person name="Aoki J."/>
            <person name="Arakawa T."/>
            <person name="Iida J."/>
            <person name="Imamura K."/>
            <person name="Itoh M."/>
            <person name="Kato T."/>
            <person name="Kawaji H."/>
            <person name="Kawagashira N."/>
            <person name="Kawashima T."/>
            <person name="Kojima M."/>
            <person name="Kondo S."/>
            <person name="Konno H."/>
            <person name="Nakano K."/>
            <person name="Ninomiya N."/>
            <person name="Nishio T."/>
            <person name="Okada M."/>
            <person name="Plessy C."/>
            <person name="Shibata K."/>
            <person name="Shiraki T."/>
            <person name="Suzuki S."/>
            <person name="Tagami M."/>
            <person name="Waki K."/>
            <person name="Watahiki A."/>
            <person name="Okamura-Oho Y."/>
            <person name="Suzuki H."/>
            <person name="Kawai J."/>
            <person name="Hayashizaki Y."/>
        </authorList>
    </citation>
    <scope>NUCLEOTIDE SEQUENCE [LARGE SCALE MRNA]</scope>
    <source>
        <strain>C57BL/6J</strain>
        <tissue>Amnion</tissue>
        <tissue>Egg</tissue>
    </source>
</reference>
<reference key="2">
    <citation type="journal article" date="2004" name="Genome Res.">
        <title>The status, quality, and expansion of the NIH full-length cDNA project: the Mammalian Gene Collection (MGC).</title>
        <authorList>
            <consortium name="The MGC Project Team"/>
        </authorList>
    </citation>
    <scope>NUCLEOTIDE SEQUENCE [LARGE SCALE MRNA]</scope>
    <source>
        <strain>FVB/N</strain>
        <tissue>Mammary tumor</tissue>
    </source>
</reference>
<reference key="3">
    <citation type="journal article" date="2009" name="Immunity">
        <title>The phagosomal proteome in interferon-gamma-activated macrophages.</title>
        <authorList>
            <person name="Trost M."/>
            <person name="English L."/>
            <person name="Lemieux S."/>
            <person name="Courcelles M."/>
            <person name="Desjardins M."/>
            <person name="Thibault P."/>
        </authorList>
    </citation>
    <scope>IDENTIFICATION BY MASS SPECTROMETRY [LARGE SCALE ANALYSIS]</scope>
</reference>
<reference key="4">
    <citation type="journal article" date="2010" name="Cell">
        <title>A tissue-specific atlas of mouse protein phosphorylation and expression.</title>
        <authorList>
            <person name="Huttlin E.L."/>
            <person name="Jedrychowski M.P."/>
            <person name="Elias J.E."/>
            <person name="Goswami T."/>
            <person name="Rad R."/>
            <person name="Beausoleil S.A."/>
            <person name="Villen J."/>
            <person name="Haas W."/>
            <person name="Sowa M.E."/>
            <person name="Gygi S.P."/>
        </authorList>
    </citation>
    <scope>PHOSPHORYLATION [LARGE SCALE ANALYSIS] AT SER-173; SER-248; SER-255 AND SER-476</scope>
    <scope>IDENTIFICATION BY MASS SPECTROMETRY [LARGE SCALE ANALYSIS]</scope>
    <source>
        <tissue>Brown adipose tissue</tissue>
        <tissue>Kidney</tissue>
        <tissue>Lung</tissue>
        <tissue>Pancreas</tissue>
        <tissue>Spleen</tissue>
        <tissue>Testis</tissue>
    </source>
</reference>
<comment type="function">
    <text evidence="2">Regulates the transcriptional activity of DNTT and ESR1. May function as a chromatin remodeling protein. Part of the small subunit (SSU) processome, first precursor of the small eukaryotic ribosomal subunit. During the assembly of the SSU processome in the nucleolus, many ribosome biogenesis factors, an RNA chaperone and ribosomal proteins associate with the nascent pre-rRNA and work in concert to generate RNA folding, modifications, rearrangements and cleavage as well as targeted degradation of pre-ribosomal RNA by the RNA exosome.</text>
</comment>
<comment type="subunit">
    <text evidence="2">Forms a ternary complex with DNTT and core histone; interaction with PCNA releases DNTT and H2A/H2B histones from this ternary complex. Interacts with ESR1, ESR2, PPARG and RXRA. Part of the small subunit (SSU) processome, composed of more than 70 proteins and the RNA chaperone small nucleolar RNA (snoRNA) U3.</text>
</comment>
<comment type="subcellular location">
    <subcellularLocation>
        <location evidence="2">Nucleus</location>
    </subcellularLocation>
    <subcellularLocation>
        <location evidence="2">Nucleus</location>
        <location evidence="2">Nucleolus</location>
    </subcellularLocation>
</comment>
<proteinExistence type="evidence at protein level"/>
<protein>
    <recommendedName>
        <fullName>Deoxynucleotidyltransferase terminal-interacting protein 2</fullName>
    </recommendedName>
</protein>
<sequence>MVVTRSGLSRTRLQESSQQKRSAPRRIGTHLESTKESGSDGSTAESQPAEKQHSRSSSRTTGPAEIIVLISDDEASETESHTSGVTSVLEDQEPIVRVTRKRQIVIASTSKSTVRKRQKVAPQHASADEVVVSEAESHVSGVSMVVPSTERSSRNKANSQRDSSQESQSGTVSDAELSCSGISSLEILPRTTARNVKKKLQFPAEKNDTKITPGNKKQIVGMSVCSEDSDATQLSARPLSQRNMPNVSDSETYNSDFDDSSPRNSGKKLTAQNHQNLHIQEEKRANVVSLTEVRKENCKSLDEEDLKITEEKVINEKDSQRSLSEAQDTSLQQSVSQNHSSTPNKKPTFQLSSPDRKALMKSLEHKFAVVNVERWNDKRGGSGKKSDLAQLGGGGGGGDDNEPTGAGISDDKSSQSGVPLECDTKPCKSELSMTQDTTDSPVLLFLSSDESQQSDSSENERDTLCSVENNGQKEASAEDLEDAACDSALFVIDKTPGLSADKNFYLEDKAPSEVAIEEEKEEEEKEEENSEEDSSDSDENKDESSDEEDLLSNTKSKLLKLTSSSIDPGLNIKQLGGLYINFNVDKLQPHKETLTQIKEKKKNELLQKAVITPDFEKKHCVPPYSESKHRLQKQRRKERQKTAGNGWFGMKAPELTDELKNDLRALKMRAGMDPKRFYKKNDRDGFPKYFQVGTIVDNPADFYHSRIPKKQRKKTIVEELLADSEFRRFNRRKYSEIMAEKAANAEGKKFKKKKKFRN</sequence>
<gene>
    <name type="primary">Dnttip2</name>
</gene>
<organism>
    <name type="scientific">Mus musculus</name>
    <name type="common">Mouse</name>
    <dbReference type="NCBI Taxonomy" id="10090"/>
    <lineage>
        <taxon>Eukaryota</taxon>
        <taxon>Metazoa</taxon>
        <taxon>Chordata</taxon>
        <taxon>Craniata</taxon>
        <taxon>Vertebrata</taxon>
        <taxon>Euteleostomi</taxon>
        <taxon>Mammalia</taxon>
        <taxon>Eutheria</taxon>
        <taxon>Euarchontoglires</taxon>
        <taxon>Glires</taxon>
        <taxon>Rodentia</taxon>
        <taxon>Myomorpha</taxon>
        <taxon>Muroidea</taxon>
        <taxon>Muridae</taxon>
        <taxon>Murinae</taxon>
        <taxon>Mus</taxon>
        <taxon>Mus</taxon>
    </lineage>
</organism>